<keyword id="KW-0963">Cytoplasm</keyword>
<keyword id="KW-0274">FAD</keyword>
<keyword id="KW-0285">Flavoprotein</keyword>
<keyword id="KW-0511">Multifunctional enzyme</keyword>
<keyword id="KW-0560">Oxidoreductase</keyword>
<keyword id="KW-1185">Reference proteome</keyword>
<keyword id="KW-0704">Schiff base</keyword>
<keyword id="KW-0784">Thiamine biosynthesis</keyword>
<keyword id="KW-0808">Transferase</keyword>
<dbReference type="EC" id="1.4.3.19"/>
<dbReference type="EC" id="2.8.1.10"/>
<dbReference type="EMBL" id="U38892">
    <property type="protein sequence ID" value="AAA96395.1"/>
    <property type="molecule type" value="Genomic_DNA"/>
</dbReference>
<dbReference type="EMBL" id="BA000022">
    <property type="protein sequence ID" value="BAA10351.1"/>
    <property type="molecule type" value="Genomic_DNA"/>
</dbReference>
<dbReference type="PIR" id="S76505">
    <property type="entry name" value="S76505"/>
</dbReference>
<dbReference type="SMR" id="Q55710"/>
<dbReference type="FunCoup" id="Q55710">
    <property type="interactions" value="360"/>
</dbReference>
<dbReference type="IntAct" id="Q55710">
    <property type="interactions" value="3"/>
</dbReference>
<dbReference type="STRING" id="1148.gene:10499852"/>
<dbReference type="PaxDb" id="1148-1001620"/>
<dbReference type="EnsemblBacteria" id="BAA10351">
    <property type="protein sequence ID" value="BAA10351"/>
    <property type="gene ID" value="BAA10351"/>
</dbReference>
<dbReference type="KEGG" id="syn:slr0633"/>
<dbReference type="eggNOG" id="COG0665">
    <property type="taxonomic scope" value="Bacteria"/>
</dbReference>
<dbReference type="eggNOG" id="COG2022">
    <property type="taxonomic scope" value="Bacteria"/>
</dbReference>
<dbReference type="InParanoid" id="Q55710"/>
<dbReference type="UniPathway" id="UPA00060"/>
<dbReference type="Proteomes" id="UP000001425">
    <property type="component" value="Chromosome"/>
</dbReference>
<dbReference type="GO" id="GO:1902508">
    <property type="term" value="C:2-iminoacetate synthase complex"/>
    <property type="evidence" value="ECO:0000318"/>
    <property type="project" value="GO_Central"/>
</dbReference>
<dbReference type="GO" id="GO:0005737">
    <property type="term" value="C:cytoplasm"/>
    <property type="evidence" value="ECO:0007669"/>
    <property type="project" value="UniProtKB-SubCell"/>
</dbReference>
<dbReference type="GO" id="GO:0050660">
    <property type="term" value="F:flavin adenine dinucleotide binding"/>
    <property type="evidence" value="ECO:0007669"/>
    <property type="project" value="InterPro"/>
</dbReference>
<dbReference type="GO" id="GO:0043799">
    <property type="term" value="F:glycine oxidase activity"/>
    <property type="evidence" value="ECO:0007669"/>
    <property type="project" value="UniProtKB-EC"/>
</dbReference>
<dbReference type="GO" id="GO:1990107">
    <property type="term" value="F:thiazole synthase activity"/>
    <property type="evidence" value="ECO:0007669"/>
    <property type="project" value="UniProtKB-EC"/>
</dbReference>
<dbReference type="GO" id="GO:0009228">
    <property type="term" value="P:thiamine biosynthetic process"/>
    <property type="evidence" value="ECO:0000318"/>
    <property type="project" value="GO_Central"/>
</dbReference>
<dbReference type="GO" id="GO:0009229">
    <property type="term" value="P:thiamine diphosphate biosynthetic process"/>
    <property type="evidence" value="ECO:0000318"/>
    <property type="project" value="GO_Central"/>
</dbReference>
<dbReference type="CDD" id="cd04728">
    <property type="entry name" value="ThiG"/>
    <property type="match status" value="1"/>
</dbReference>
<dbReference type="Gene3D" id="3.20.20.70">
    <property type="entry name" value="Aldolase class I"/>
    <property type="match status" value="1"/>
</dbReference>
<dbReference type="Gene3D" id="3.30.9.10">
    <property type="entry name" value="D-Amino Acid Oxidase, subunit A, domain 2"/>
    <property type="match status" value="1"/>
</dbReference>
<dbReference type="Gene3D" id="3.50.50.60">
    <property type="entry name" value="FAD/NAD(P)-binding domain"/>
    <property type="match status" value="1"/>
</dbReference>
<dbReference type="HAMAP" id="MF_00443">
    <property type="entry name" value="ThiG"/>
    <property type="match status" value="1"/>
</dbReference>
<dbReference type="InterPro" id="IPR013785">
    <property type="entry name" value="Aldolase_TIM"/>
</dbReference>
<dbReference type="InterPro" id="IPR006076">
    <property type="entry name" value="FAD-dep_OxRdtase"/>
</dbReference>
<dbReference type="InterPro" id="IPR036188">
    <property type="entry name" value="FAD/NAD-bd_sf"/>
</dbReference>
<dbReference type="InterPro" id="IPR012727">
    <property type="entry name" value="Gly_oxidase_ThiO"/>
</dbReference>
<dbReference type="InterPro" id="IPR033983">
    <property type="entry name" value="Thiazole_synthase_ThiG"/>
</dbReference>
<dbReference type="InterPro" id="IPR008867">
    <property type="entry name" value="ThiG"/>
</dbReference>
<dbReference type="NCBIfam" id="TIGR02352">
    <property type="entry name" value="thiamin_ThiO"/>
    <property type="match status" value="1"/>
</dbReference>
<dbReference type="PANTHER" id="PTHR34266">
    <property type="entry name" value="THIAZOLE SYNTHASE"/>
    <property type="match status" value="1"/>
</dbReference>
<dbReference type="PANTHER" id="PTHR34266:SF2">
    <property type="entry name" value="THIAZOLE SYNTHASE"/>
    <property type="match status" value="1"/>
</dbReference>
<dbReference type="Pfam" id="PF01266">
    <property type="entry name" value="DAO"/>
    <property type="match status" value="1"/>
</dbReference>
<dbReference type="Pfam" id="PF05690">
    <property type="entry name" value="ThiG"/>
    <property type="match status" value="1"/>
</dbReference>
<dbReference type="SUPFAM" id="SSF54373">
    <property type="entry name" value="FAD-linked reductases, C-terminal domain"/>
    <property type="match status" value="1"/>
</dbReference>
<dbReference type="SUPFAM" id="SSF51905">
    <property type="entry name" value="FAD/NAD(P)-binding domain"/>
    <property type="match status" value="1"/>
</dbReference>
<dbReference type="SUPFAM" id="SSF110399">
    <property type="entry name" value="ThiG-like"/>
    <property type="match status" value="1"/>
</dbReference>
<protein>
    <recommendedName>
        <fullName>Bifunctional protein ThiO/ThiG</fullName>
    </recommendedName>
    <domain>
        <recommendedName>
            <fullName>Probable FAD-dependent glycine oxidase</fullName>
            <ecNumber>1.4.3.19</ecNumber>
        </recommendedName>
    </domain>
    <domain>
        <recommendedName>
            <fullName>Thiazole synthase</fullName>
            <ecNumber>2.8.1.10</ecNumber>
        </recommendedName>
    </domain>
</protein>
<proteinExistence type="inferred from homology"/>
<sequence length="656" mass="70271">MQTTSDVLIIGGGIIGLAIAVELKLKQKRLQVTVLSRDFAQAASHAAAGMLAPHAEQIAPGPMLDLCLASRWRYGEWVEKLEQLTGMETGYNPCGILSPVFEAPHGNSSTNSAWLDQETIRYYQPGLGEDVIGGWWHPDDGQVDNRKLVSALRQAAQSLGVQIQEGVTVQAIAQRHGQVTAVLTDQGSFQADSYVLANGSWAKELLPLPVFPVKGQMMALRMPAGTHQPYPLQRVLFGPQTYLVPRRDGRLIVGATSEQVDWQPHNTPQGIQTLLGRAIRLFPALGDWAIEDFWWGFRPGTPDEQPFLGYGPCDNLILAIGHYRNGILLAPITAALISDLILDQKVSPLIHAFSPQRFLTTTNPPVLSCRPMTAVFPSIANPSLPHAAENSEGSKDLLEIAGRKFHSRLMTGTGKYPSLTTMQESVASSGCQIVTVAVRRVQTNAPGHEGLAEAIDWSTIWMLPNTAGCQTAEEAIRVARLGREMAKLLGQEDNNFIKLEVIPDTQYLLPDPIGTLEAAEQLVKEGFAVLPYINADPLLAKRLEEVGCATVMPLGSPIGSGQGIRNAANIGIIIENAKVPVVVDAGIGTPSEAAQAMEMGADAVLINSAIAMAANPVAMAQAMGMATQAGRLAYLSGRMPIKAKANASSPLTGLVG</sequence>
<reference key="1">
    <citation type="submission" date="1995-10" db="EMBL/GenBank/DDBJ databases">
        <title>Cloning, expression and inactivation of the ruvB gene from the cyanobacterium Synechocystis PCC6803.</title>
        <authorList>
            <person name="Bulteau S."/>
            <person name="Cassier-Chauvat C."/>
            <person name="Chauvat F."/>
        </authorList>
    </citation>
    <scope>NUCLEOTIDE SEQUENCE [GENOMIC DNA]</scope>
</reference>
<reference key="2">
    <citation type="journal article" date="1995" name="DNA Res.">
        <title>Sequence analysis of the genome of the unicellular cyanobacterium Synechocystis sp. strain PCC6803. I. Sequence features in the 1 Mb region from map positions 64% to 92% of the genome.</title>
        <authorList>
            <person name="Kaneko T."/>
            <person name="Tanaka A."/>
            <person name="Sato S."/>
            <person name="Kotani H."/>
            <person name="Sazuka T."/>
            <person name="Miyajima N."/>
            <person name="Sugiura M."/>
            <person name="Tabata S."/>
        </authorList>
    </citation>
    <scope>NUCLEOTIDE SEQUENCE [LARGE SCALE GENOMIC DNA]</scope>
    <source>
        <strain>ATCC 27184 / PCC 6803 / N-1</strain>
    </source>
</reference>
<reference key="3">
    <citation type="journal article" date="1996" name="DNA Res.">
        <title>Sequence analysis of the genome of the unicellular cyanobacterium Synechocystis sp. strain PCC6803. II. Sequence determination of the entire genome and assignment of potential protein-coding regions.</title>
        <authorList>
            <person name="Kaneko T."/>
            <person name="Sato S."/>
            <person name="Kotani H."/>
            <person name="Tanaka A."/>
            <person name="Asamizu E."/>
            <person name="Nakamura Y."/>
            <person name="Miyajima N."/>
            <person name="Hirosawa M."/>
            <person name="Sugiura M."/>
            <person name="Sasamoto S."/>
            <person name="Kimura T."/>
            <person name="Hosouchi T."/>
            <person name="Matsuno A."/>
            <person name="Muraki A."/>
            <person name="Nakazaki N."/>
            <person name="Naruo K."/>
            <person name="Okumura S."/>
            <person name="Shimpo S."/>
            <person name="Takeuchi C."/>
            <person name="Wada T."/>
            <person name="Watanabe A."/>
            <person name="Yamada M."/>
            <person name="Yasuda M."/>
            <person name="Tabata S."/>
        </authorList>
    </citation>
    <scope>NUCLEOTIDE SEQUENCE [LARGE SCALE GENOMIC DNA]</scope>
    <source>
        <strain>ATCC 27184 / PCC 6803 / Kazusa</strain>
    </source>
</reference>
<comment type="function">
    <text evidence="1">Catalyzes the FAD-dependent oxidative deamination of glycine. Is essential for thiamine biosynthesis since the oxidation of glycine catalyzed by ThiO generates the glycine imine intermediate (dehydroglycine) required for the biosynthesis of the thiazole ring of thiamine pyrophosphate.</text>
</comment>
<comment type="function">
    <text evidence="1">Catalyzes the rearrangement of 1-deoxy-D-xylulose 5-phosphate (DXP) to produce the thiazole phosphate moiety of thiamine. Sulfur is provided by the thiocarboxylate moiety of the carrier protein ThiS. In vitro, sulfur can be provided by H(2)S.</text>
</comment>
<comment type="catalytic activity">
    <reaction>
        <text>glycine + O2 + H2O = glyoxylate + H2O2 + NH4(+)</text>
        <dbReference type="Rhea" id="RHEA:11532"/>
        <dbReference type="ChEBI" id="CHEBI:15377"/>
        <dbReference type="ChEBI" id="CHEBI:15379"/>
        <dbReference type="ChEBI" id="CHEBI:16240"/>
        <dbReference type="ChEBI" id="CHEBI:28938"/>
        <dbReference type="ChEBI" id="CHEBI:36655"/>
        <dbReference type="ChEBI" id="CHEBI:57305"/>
        <dbReference type="EC" id="1.4.3.19"/>
    </reaction>
</comment>
<comment type="catalytic activity">
    <reaction>
        <text>[ThiS sulfur-carrier protein]-C-terminal-Gly-aminoethanethioate + 2-iminoacetate + 1-deoxy-D-xylulose 5-phosphate = [ThiS sulfur-carrier protein]-C-terminal Gly-Gly + 2-[(2R,5Z)-2-carboxy-4-methylthiazol-5(2H)-ylidene]ethyl phosphate + 2 H2O + H(+)</text>
        <dbReference type="Rhea" id="RHEA:26297"/>
        <dbReference type="Rhea" id="RHEA-COMP:12909"/>
        <dbReference type="Rhea" id="RHEA-COMP:19908"/>
        <dbReference type="ChEBI" id="CHEBI:15377"/>
        <dbReference type="ChEBI" id="CHEBI:15378"/>
        <dbReference type="ChEBI" id="CHEBI:57792"/>
        <dbReference type="ChEBI" id="CHEBI:62899"/>
        <dbReference type="ChEBI" id="CHEBI:77846"/>
        <dbReference type="ChEBI" id="CHEBI:90778"/>
        <dbReference type="ChEBI" id="CHEBI:232372"/>
        <dbReference type="EC" id="2.8.1.10"/>
    </reaction>
</comment>
<comment type="cofactor">
    <cofactor evidence="1">
        <name>FAD</name>
        <dbReference type="ChEBI" id="CHEBI:57692"/>
    </cofactor>
</comment>
<comment type="pathway">
    <text>Cofactor biosynthesis; thiamine diphosphate biosynthesis.</text>
</comment>
<comment type="subunit">
    <text evidence="1">Interacts with ThiH and ThiS.</text>
</comment>
<comment type="subcellular location">
    <subcellularLocation>
        <location evidence="1">Cytoplasm</location>
    </subcellularLocation>
</comment>
<comment type="similarity">
    <text evidence="2">In the N-terminal section; belongs to the DAO family. ThiO subfamily.</text>
</comment>
<comment type="similarity">
    <text evidence="2">In the C-terminal section; belongs to the ThiG family.</text>
</comment>
<organism>
    <name type="scientific">Synechocystis sp. (strain ATCC 27184 / PCC 6803 / Kazusa)</name>
    <dbReference type="NCBI Taxonomy" id="1111708"/>
    <lineage>
        <taxon>Bacteria</taxon>
        <taxon>Bacillati</taxon>
        <taxon>Cyanobacteriota</taxon>
        <taxon>Cyanophyceae</taxon>
        <taxon>Synechococcales</taxon>
        <taxon>Merismopediaceae</taxon>
        <taxon>Synechocystis</taxon>
    </lineage>
</organism>
<accession>Q55710</accession>
<accession>Q55064</accession>
<name>THIOG_SYNY3</name>
<evidence type="ECO:0000250" key="1"/>
<evidence type="ECO:0000305" key="2"/>
<gene>
    <name type="primary">thiO/thiG</name>
    <name type="ordered locus">slr0633</name>
</gene>
<feature type="chain" id="PRO_0000162867" description="Bifunctional protein ThiO/ThiG">
    <location>
        <begin position="1"/>
        <end position="656"/>
    </location>
</feature>
<feature type="region of interest" description="ThiO">
    <location>
        <begin position="1"/>
        <end position="395"/>
    </location>
</feature>
<feature type="region of interest" description="ThiG">
    <location>
        <begin position="396"/>
        <end position="656"/>
    </location>
</feature>
<feature type="active site" description="Schiff-base intermediate with DXP" evidence="1">
    <location>
        <position position="498"/>
    </location>
</feature>
<feature type="binding site" evidence="1">
    <location>
        <begin position="7"/>
        <end position="21"/>
    </location>
    <ligand>
        <name>FAD</name>
        <dbReference type="ChEBI" id="CHEBI:57692"/>
    </ligand>
</feature>
<feature type="binding site" evidence="1">
    <location>
        <begin position="48"/>
        <end position="50"/>
    </location>
    <ligand>
        <name>FAD</name>
        <dbReference type="ChEBI" id="CHEBI:57692"/>
    </ligand>
</feature>
<feature type="binding site" evidence="1">
    <location>
        <position position="56"/>
    </location>
    <ligand>
        <name>glycine</name>
        <dbReference type="ChEBI" id="CHEBI:57305"/>
    </ligand>
</feature>
<feature type="binding site" evidence="1">
    <location>
        <position position="169"/>
    </location>
    <ligand>
        <name>FAD</name>
        <dbReference type="ChEBI" id="CHEBI:57692"/>
    </ligand>
</feature>
<feature type="binding site" evidence="1">
    <location>
        <position position="298"/>
    </location>
    <ligand>
        <name>glycine</name>
        <dbReference type="ChEBI" id="CHEBI:57305"/>
    </ligand>
</feature>
<feature type="binding site" evidence="1">
    <location>
        <begin position="322"/>
        <end position="328"/>
    </location>
    <ligand>
        <name>FAD</name>
        <dbReference type="ChEBI" id="CHEBI:57692"/>
    </ligand>
</feature>
<feature type="binding site" evidence="1">
    <location>
        <position position="324"/>
    </location>
    <ligand>
        <name>glycine</name>
        <dbReference type="ChEBI" id="CHEBI:57305"/>
    </ligand>
</feature>
<feature type="binding site" evidence="1">
    <location>
        <position position="559"/>
    </location>
    <ligand>
        <name>1-deoxy-D-xylulose 5-phosphate</name>
        <dbReference type="ChEBI" id="CHEBI:57792"/>
    </ligand>
</feature>
<feature type="binding site" evidence="1">
    <location>
        <begin position="585"/>
        <end position="586"/>
    </location>
    <ligand>
        <name>1-deoxy-D-xylulose 5-phosphate</name>
        <dbReference type="ChEBI" id="CHEBI:57792"/>
    </ligand>
</feature>
<feature type="binding site" evidence="1">
    <location>
        <begin position="607"/>
        <end position="608"/>
    </location>
    <ligand>
        <name>1-deoxy-D-xylulose 5-phosphate</name>
        <dbReference type="ChEBI" id="CHEBI:57792"/>
    </ligand>
</feature>
<feature type="sequence conflict" description="In Ref. 1; AAA96395." evidence="2" ref="1">
    <original>A</original>
    <variation>R</variation>
    <location>
        <position position="454"/>
    </location>
</feature>